<name>SYV_EHRRG</name>
<evidence type="ECO:0000255" key="1">
    <source>
        <dbReference type="HAMAP-Rule" id="MF_02005"/>
    </source>
</evidence>
<feature type="chain" id="PRO_0000224609" description="Valine--tRNA ligase">
    <location>
        <begin position="1"/>
        <end position="812"/>
    </location>
</feature>
<feature type="short sequence motif" description="'HIGH' region">
    <location>
        <begin position="47"/>
        <end position="57"/>
    </location>
</feature>
<feature type="short sequence motif" description="'KMSKS' region">
    <location>
        <begin position="536"/>
        <end position="540"/>
    </location>
</feature>
<feature type="binding site" evidence="1">
    <location>
        <position position="539"/>
    </location>
    <ligand>
        <name>ATP</name>
        <dbReference type="ChEBI" id="CHEBI:30616"/>
    </ligand>
</feature>
<organism>
    <name type="scientific">Ehrlichia ruminantium (strain Gardel)</name>
    <dbReference type="NCBI Taxonomy" id="302409"/>
    <lineage>
        <taxon>Bacteria</taxon>
        <taxon>Pseudomonadati</taxon>
        <taxon>Pseudomonadota</taxon>
        <taxon>Alphaproteobacteria</taxon>
        <taxon>Rickettsiales</taxon>
        <taxon>Anaplasmataceae</taxon>
        <taxon>Ehrlichia</taxon>
    </lineage>
</organism>
<comment type="function">
    <text evidence="1">Catalyzes the attachment of valine to tRNA(Val). As ValRS can inadvertently accommodate and process structurally similar amino acids such as threonine, to avoid such errors, it has a 'posttransfer' editing activity that hydrolyzes mischarged Thr-tRNA(Val) in a tRNA-dependent manner.</text>
</comment>
<comment type="catalytic activity">
    <reaction evidence="1">
        <text>tRNA(Val) + L-valine + ATP = L-valyl-tRNA(Val) + AMP + diphosphate</text>
        <dbReference type="Rhea" id="RHEA:10704"/>
        <dbReference type="Rhea" id="RHEA-COMP:9672"/>
        <dbReference type="Rhea" id="RHEA-COMP:9708"/>
        <dbReference type="ChEBI" id="CHEBI:30616"/>
        <dbReference type="ChEBI" id="CHEBI:33019"/>
        <dbReference type="ChEBI" id="CHEBI:57762"/>
        <dbReference type="ChEBI" id="CHEBI:78442"/>
        <dbReference type="ChEBI" id="CHEBI:78537"/>
        <dbReference type="ChEBI" id="CHEBI:456215"/>
        <dbReference type="EC" id="6.1.1.9"/>
    </reaction>
</comment>
<comment type="subunit">
    <text evidence="1">Monomer.</text>
</comment>
<comment type="subcellular location">
    <subcellularLocation>
        <location evidence="1">Cytoplasm</location>
    </subcellularLocation>
</comment>
<comment type="domain">
    <text evidence="1">ValRS has two distinct active sites: one for aminoacylation and one for editing. The misactivated threonine is translocated from the active site to the editing site.</text>
</comment>
<comment type="similarity">
    <text evidence="1">Belongs to the class-I aminoacyl-tRNA synthetase family. ValS type 2 subfamily.</text>
</comment>
<proteinExistence type="inferred from homology"/>
<dbReference type="EC" id="6.1.1.9" evidence="1"/>
<dbReference type="EMBL" id="CR925677">
    <property type="protein sequence ID" value="CAI27520.1"/>
    <property type="molecule type" value="Genomic_DNA"/>
</dbReference>
<dbReference type="SMR" id="Q5FF72"/>
<dbReference type="KEGG" id="erg:ERGA_CDS_00680"/>
<dbReference type="HOGENOM" id="CLU_001493_0_2_5"/>
<dbReference type="Proteomes" id="UP000000533">
    <property type="component" value="Chromosome"/>
</dbReference>
<dbReference type="GO" id="GO:0005829">
    <property type="term" value="C:cytosol"/>
    <property type="evidence" value="ECO:0007669"/>
    <property type="project" value="TreeGrafter"/>
</dbReference>
<dbReference type="GO" id="GO:0002161">
    <property type="term" value="F:aminoacyl-tRNA deacylase activity"/>
    <property type="evidence" value="ECO:0007669"/>
    <property type="project" value="InterPro"/>
</dbReference>
<dbReference type="GO" id="GO:0005524">
    <property type="term" value="F:ATP binding"/>
    <property type="evidence" value="ECO:0007669"/>
    <property type="project" value="UniProtKB-UniRule"/>
</dbReference>
<dbReference type="GO" id="GO:0004832">
    <property type="term" value="F:valine-tRNA ligase activity"/>
    <property type="evidence" value="ECO:0007669"/>
    <property type="project" value="UniProtKB-UniRule"/>
</dbReference>
<dbReference type="GO" id="GO:0006438">
    <property type="term" value="P:valyl-tRNA aminoacylation"/>
    <property type="evidence" value="ECO:0007669"/>
    <property type="project" value="UniProtKB-UniRule"/>
</dbReference>
<dbReference type="CDD" id="cd07962">
    <property type="entry name" value="Anticodon_Ia_Val"/>
    <property type="match status" value="1"/>
</dbReference>
<dbReference type="FunFam" id="3.40.50.620:FF:000192">
    <property type="entry name" value="Valine--tRNA ligase"/>
    <property type="match status" value="1"/>
</dbReference>
<dbReference type="Gene3D" id="3.40.50.620">
    <property type="entry name" value="HUPs"/>
    <property type="match status" value="2"/>
</dbReference>
<dbReference type="Gene3D" id="1.10.730.10">
    <property type="entry name" value="Isoleucyl-tRNA Synthetase, Domain 1"/>
    <property type="match status" value="1"/>
</dbReference>
<dbReference type="HAMAP" id="MF_02005">
    <property type="entry name" value="Val_tRNA_synth_type2"/>
    <property type="match status" value="1"/>
</dbReference>
<dbReference type="InterPro" id="IPR001412">
    <property type="entry name" value="aa-tRNA-synth_I_CS"/>
</dbReference>
<dbReference type="InterPro" id="IPR002300">
    <property type="entry name" value="aa-tRNA-synth_Ia"/>
</dbReference>
<dbReference type="InterPro" id="IPR033705">
    <property type="entry name" value="Anticodon_Ia_Val"/>
</dbReference>
<dbReference type="InterPro" id="IPR013155">
    <property type="entry name" value="M/V/L/I-tRNA-synth_anticd-bd"/>
</dbReference>
<dbReference type="InterPro" id="IPR014729">
    <property type="entry name" value="Rossmann-like_a/b/a_fold"/>
</dbReference>
<dbReference type="InterPro" id="IPR009080">
    <property type="entry name" value="tRNAsynth_Ia_anticodon-bd"/>
</dbReference>
<dbReference type="InterPro" id="IPR009008">
    <property type="entry name" value="Val/Leu/Ile-tRNA-synth_edit"/>
</dbReference>
<dbReference type="InterPro" id="IPR022874">
    <property type="entry name" value="Valine-tRNA_ligase_type_2"/>
</dbReference>
<dbReference type="InterPro" id="IPR002303">
    <property type="entry name" value="Valyl-tRNA_ligase"/>
</dbReference>
<dbReference type="NCBIfam" id="NF009687">
    <property type="entry name" value="PRK13208.1"/>
    <property type="match status" value="1"/>
</dbReference>
<dbReference type="NCBIfam" id="TIGR00422">
    <property type="entry name" value="valS"/>
    <property type="match status" value="1"/>
</dbReference>
<dbReference type="PANTHER" id="PTHR11946:SF93">
    <property type="entry name" value="VALINE--TRNA LIGASE, CHLOROPLASTIC_MITOCHONDRIAL 2"/>
    <property type="match status" value="1"/>
</dbReference>
<dbReference type="PANTHER" id="PTHR11946">
    <property type="entry name" value="VALYL-TRNA SYNTHETASES"/>
    <property type="match status" value="1"/>
</dbReference>
<dbReference type="Pfam" id="PF08264">
    <property type="entry name" value="Anticodon_1"/>
    <property type="match status" value="1"/>
</dbReference>
<dbReference type="Pfam" id="PF00133">
    <property type="entry name" value="tRNA-synt_1"/>
    <property type="match status" value="1"/>
</dbReference>
<dbReference type="PRINTS" id="PR00986">
    <property type="entry name" value="TRNASYNTHVAL"/>
</dbReference>
<dbReference type="SUPFAM" id="SSF47323">
    <property type="entry name" value="Anticodon-binding domain of a subclass of class I aminoacyl-tRNA synthetases"/>
    <property type="match status" value="1"/>
</dbReference>
<dbReference type="SUPFAM" id="SSF52374">
    <property type="entry name" value="Nucleotidylyl transferase"/>
    <property type="match status" value="1"/>
</dbReference>
<dbReference type="SUPFAM" id="SSF50677">
    <property type="entry name" value="ValRS/IleRS/LeuRS editing domain"/>
    <property type="match status" value="1"/>
</dbReference>
<dbReference type="PROSITE" id="PS00178">
    <property type="entry name" value="AA_TRNA_LIGASE_I"/>
    <property type="match status" value="1"/>
</dbReference>
<protein>
    <recommendedName>
        <fullName evidence="1">Valine--tRNA ligase</fullName>
        <ecNumber evidence="1">6.1.1.9</ecNumber>
    </recommendedName>
    <alternativeName>
        <fullName evidence="1">Valyl-tRNA synthetase</fullName>
        <shortName evidence="1">ValRS</shortName>
    </alternativeName>
</protein>
<gene>
    <name evidence="1" type="primary">valS</name>
    <name type="ordered locus">ERGA_CDS_00680</name>
</gene>
<keyword id="KW-0030">Aminoacyl-tRNA synthetase</keyword>
<keyword id="KW-0067">ATP-binding</keyword>
<keyword id="KW-0963">Cytoplasm</keyword>
<keyword id="KW-0436">Ligase</keyword>
<keyword id="KW-0547">Nucleotide-binding</keyword>
<keyword id="KW-0648">Protein biosynthesis</keyword>
<accession>Q5FF72</accession>
<reference key="1">
    <citation type="journal article" date="2006" name="J. Bacteriol.">
        <title>Comparative genomic analysis of three strains of Ehrlichia ruminantium reveals an active process of genome size plasticity.</title>
        <authorList>
            <person name="Frutos R."/>
            <person name="Viari A."/>
            <person name="Ferraz C."/>
            <person name="Morgat A."/>
            <person name="Eychenie S."/>
            <person name="Kandassamy Y."/>
            <person name="Chantal I."/>
            <person name="Bensaid A."/>
            <person name="Coissac E."/>
            <person name="Vachiery N."/>
            <person name="Demaille J."/>
            <person name="Martinez D."/>
        </authorList>
    </citation>
    <scope>NUCLEOTIDE SEQUENCE [LARGE SCALE GENOMIC DNA]</scope>
    <source>
        <strain>Gardel</strain>
    </source>
</reference>
<sequence>MIMQSLFSNKYKFKDTEEKLNAYWDKIKLYKWKNLQGKQFIIDTPPPTISGQLHIGHVFSYCHTDFIARYQRMLGKDVLYPIGFDDNGLPTERLVEKIKKVRAADIDRKEFKALCNEVSAKFRMEFKILFQSLGISYDWDLEYHTISEEIQKLSQMSFIALYNMGKIYRKLQPIFWDCADRTAIARVEVEEKEMSSFMSTIAFSTEAGERINIATTRPELMPACVALFFNPLDIRYQHLQGQYAIVPIFGNKVPILSDEQVKIDKGTGLVMCCTFGDELDVYWWNKHNLNTQIIISKSGTLDLKHNIAETDTLSGKLHGVSIVEARKLVLETLSKCNLLIKKEEILHNVKCAERSGMPIEILLSNQWFIKVVEVKHELLEQVRKINWYPQSMRKQIEMWIDGLNWDWCISRQRYFGIPFPVWYSKRDNEEIIIPDVNELPIDPTETLPQGYSKEEVEADVDVMDTWATSSLSPQFNSIHTGINSIPLVPASLRAQSHEIIRSWAFYTILQAYYHHNSIPWENIMVSGWCLAADKSKMSKSKGNALIPNQLLQEYGADVIRYWAANSRLGSDTVFSDEVLQLGKRLVTKLWNASKFVSMFVSQCQIPDLNYVTETMDKWVLTKLYKVIVKATESFDVFEYCVALDYIESFFWKDFCDNYLELVKKRAYGESVTSKENLSAVNTLSFVLTTLLKMLAPFMPYITEEIYSTLYNNGSIHDHDNWPIVNTSLCNEMDEQLGEDFIEILNQVRKIKANAQLSVKCKIYKLIINSENYDFPTSWENDLKAVCNAEHIVRDKRTSYYDDKFLVSVQFAS</sequence>